<accession>Q54MT2</accession>
<sequence>MATHILFETATGFNIFQLSGMESIAEFTDQVQKSMQDFSKFSKVCKMVGSLPFTSAENALENINSISEGILTESLHDFLKQTFSKKTEGVVLGVCDNKLSASIGDELKISCLSNSHTSEIIRCIRNHISEFTKLKSADLLKAQLGLGHSYSRSKVKFNVHKVDNMIIQSICLLEQLDKDLNTFFMRLREWYSWHFPELLKIIESQVHFAKLAKLIQNKKNLTEESLDEIKEILEDNESLAKDVLSAAKASMGGDISQIDLVTVMHFADRVISLDEYRTNLTQYLAKKMQDIAPNLSALVGDRIGAKLISRAGSLTSLAKYPASTVQILGAEKALFRAMKVRGKTPKYGIIFNASAVSSETKNKGRIARCLSNKISIATRIDCFSDNPTAKFGVALKQQVADRIKFFNNGVAPKRNLDVMKEVIEEVEKDFAEEEVKPVVKESSSKKRKESEPTEEKSSKKSKKEEKSSKKSKSDDVEMKEEPVKEEKKSSKKSSSKKEEEPVKEEKKSSSKKEDKKEKKESKKDEKEEKKSSKKDKKEKK</sequence>
<protein>
    <recommendedName>
        <fullName>Nucleolar protein 56</fullName>
    </recommendedName>
    <alternativeName>
        <fullName>Nucleolar protein 5A</fullName>
    </alternativeName>
</protein>
<evidence type="ECO:0000250" key="1">
    <source>
        <dbReference type="UniProtKB" id="O00567"/>
    </source>
</evidence>
<evidence type="ECO:0000255" key="2">
    <source>
        <dbReference type="PROSITE-ProRule" id="PRU00690"/>
    </source>
</evidence>
<evidence type="ECO:0000256" key="3">
    <source>
        <dbReference type="SAM" id="MobiDB-lite"/>
    </source>
</evidence>
<evidence type="ECO:0000305" key="4"/>
<feature type="chain" id="PRO_0000331208" description="Nucleolar protein 56">
    <location>
        <begin position="1"/>
        <end position="540"/>
    </location>
</feature>
<feature type="domain" description="Nop" evidence="2">
    <location>
        <begin position="291"/>
        <end position="408"/>
    </location>
</feature>
<feature type="region of interest" description="Disordered" evidence="3">
    <location>
        <begin position="434"/>
        <end position="540"/>
    </location>
</feature>
<feature type="compositionally biased region" description="Basic and acidic residues" evidence="3">
    <location>
        <begin position="434"/>
        <end position="488"/>
    </location>
</feature>
<feature type="compositionally biased region" description="Basic and acidic residues" evidence="3">
    <location>
        <begin position="495"/>
        <end position="530"/>
    </location>
</feature>
<feature type="compositionally biased region" description="Basic residues" evidence="3">
    <location>
        <begin position="531"/>
        <end position="540"/>
    </location>
</feature>
<reference key="1">
    <citation type="journal article" date="2005" name="Nature">
        <title>The genome of the social amoeba Dictyostelium discoideum.</title>
        <authorList>
            <person name="Eichinger L."/>
            <person name="Pachebat J.A."/>
            <person name="Gloeckner G."/>
            <person name="Rajandream M.A."/>
            <person name="Sucgang R."/>
            <person name="Berriman M."/>
            <person name="Song J."/>
            <person name="Olsen R."/>
            <person name="Szafranski K."/>
            <person name="Xu Q."/>
            <person name="Tunggal B."/>
            <person name="Kummerfeld S."/>
            <person name="Madera M."/>
            <person name="Konfortov B.A."/>
            <person name="Rivero F."/>
            <person name="Bankier A.T."/>
            <person name="Lehmann R."/>
            <person name="Hamlin N."/>
            <person name="Davies R."/>
            <person name="Gaudet P."/>
            <person name="Fey P."/>
            <person name="Pilcher K."/>
            <person name="Chen G."/>
            <person name="Saunders D."/>
            <person name="Sodergren E.J."/>
            <person name="Davis P."/>
            <person name="Kerhornou A."/>
            <person name="Nie X."/>
            <person name="Hall N."/>
            <person name="Anjard C."/>
            <person name="Hemphill L."/>
            <person name="Bason N."/>
            <person name="Farbrother P."/>
            <person name="Desany B."/>
            <person name="Just E."/>
            <person name="Morio T."/>
            <person name="Rost R."/>
            <person name="Churcher C.M."/>
            <person name="Cooper J."/>
            <person name="Haydock S."/>
            <person name="van Driessche N."/>
            <person name="Cronin A."/>
            <person name="Goodhead I."/>
            <person name="Muzny D.M."/>
            <person name="Mourier T."/>
            <person name="Pain A."/>
            <person name="Lu M."/>
            <person name="Harper D."/>
            <person name="Lindsay R."/>
            <person name="Hauser H."/>
            <person name="James K.D."/>
            <person name="Quiles M."/>
            <person name="Madan Babu M."/>
            <person name="Saito T."/>
            <person name="Buchrieser C."/>
            <person name="Wardroper A."/>
            <person name="Felder M."/>
            <person name="Thangavelu M."/>
            <person name="Johnson D."/>
            <person name="Knights A."/>
            <person name="Loulseged H."/>
            <person name="Mungall K.L."/>
            <person name="Oliver K."/>
            <person name="Price C."/>
            <person name="Quail M.A."/>
            <person name="Urushihara H."/>
            <person name="Hernandez J."/>
            <person name="Rabbinowitsch E."/>
            <person name="Steffen D."/>
            <person name="Sanders M."/>
            <person name="Ma J."/>
            <person name="Kohara Y."/>
            <person name="Sharp S."/>
            <person name="Simmonds M.N."/>
            <person name="Spiegler S."/>
            <person name="Tivey A."/>
            <person name="Sugano S."/>
            <person name="White B."/>
            <person name="Walker D."/>
            <person name="Woodward J.R."/>
            <person name="Winckler T."/>
            <person name="Tanaka Y."/>
            <person name="Shaulsky G."/>
            <person name="Schleicher M."/>
            <person name="Weinstock G.M."/>
            <person name="Rosenthal A."/>
            <person name="Cox E.C."/>
            <person name="Chisholm R.L."/>
            <person name="Gibbs R.A."/>
            <person name="Loomis W.F."/>
            <person name="Platzer M."/>
            <person name="Kay R.R."/>
            <person name="Williams J.G."/>
            <person name="Dear P.H."/>
            <person name="Noegel A.A."/>
            <person name="Barrell B.G."/>
            <person name="Kuspa A."/>
        </authorList>
    </citation>
    <scope>NUCLEOTIDE SEQUENCE [LARGE SCALE GENOMIC DNA]</scope>
    <source>
        <strain>AX4</strain>
    </source>
</reference>
<name>NOP56_DICDI</name>
<gene>
    <name type="primary">nop56</name>
    <name type="synonym">nol5a</name>
    <name type="ORF">DDB_G0285679</name>
</gene>
<organism>
    <name type="scientific">Dictyostelium discoideum</name>
    <name type="common">Social amoeba</name>
    <dbReference type="NCBI Taxonomy" id="44689"/>
    <lineage>
        <taxon>Eukaryota</taxon>
        <taxon>Amoebozoa</taxon>
        <taxon>Evosea</taxon>
        <taxon>Eumycetozoa</taxon>
        <taxon>Dictyostelia</taxon>
        <taxon>Dictyosteliales</taxon>
        <taxon>Dictyosteliaceae</taxon>
        <taxon>Dictyostelium</taxon>
    </lineage>
</organism>
<proteinExistence type="inferred from homology"/>
<dbReference type="EMBL" id="AAFI02000079">
    <property type="protein sequence ID" value="EAL64677.1"/>
    <property type="molecule type" value="Genomic_DNA"/>
</dbReference>
<dbReference type="RefSeq" id="XP_638211.1">
    <property type="nucleotide sequence ID" value="XM_633119.1"/>
</dbReference>
<dbReference type="SMR" id="Q54MT2"/>
<dbReference type="FunCoup" id="Q54MT2">
    <property type="interactions" value="920"/>
</dbReference>
<dbReference type="STRING" id="44689.Q54MT2"/>
<dbReference type="PaxDb" id="44689-DDB0237576"/>
<dbReference type="EnsemblProtists" id="EAL64677">
    <property type="protein sequence ID" value="EAL64677"/>
    <property type="gene ID" value="DDB_G0285679"/>
</dbReference>
<dbReference type="GeneID" id="8625259"/>
<dbReference type="KEGG" id="ddi:DDB_G0285679"/>
<dbReference type="dictyBase" id="DDB_G0285679">
    <property type="gene designation" value="nol5a"/>
</dbReference>
<dbReference type="VEuPathDB" id="AmoebaDB:DDB_G0285679"/>
<dbReference type="eggNOG" id="KOG2573">
    <property type="taxonomic scope" value="Eukaryota"/>
</dbReference>
<dbReference type="HOGENOM" id="CLU_015495_5_2_1"/>
<dbReference type="InParanoid" id="Q54MT2"/>
<dbReference type="OMA" id="PDNYMFA"/>
<dbReference type="PhylomeDB" id="Q54MT2"/>
<dbReference type="Reactome" id="R-DDI-6791226">
    <property type="pathway name" value="Major pathway of rRNA processing in the nucleolus and cytosol"/>
</dbReference>
<dbReference type="PRO" id="PR:Q54MT2"/>
<dbReference type="Proteomes" id="UP000002195">
    <property type="component" value="Chromosome 4"/>
</dbReference>
<dbReference type="GO" id="GO:0031428">
    <property type="term" value="C:box C/D methylation guide snoRNP complex"/>
    <property type="evidence" value="ECO:0000318"/>
    <property type="project" value="GO_Central"/>
</dbReference>
<dbReference type="GO" id="GO:0005730">
    <property type="term" value="C:nucleolus"/>
    <property type="evidence" value="ECO:0007669"/>
    <property type="project" value="UniProtKB-SubCell"/>
</dbReference>
<dbReference type="GO" id="GO:0032040">
    <property type="term" value="C:small-subunit processome"/>
    <property type="evidence" value="ECO:0000250"/>
    <property type="project" value="UniProtKB"/>
</dbReference>
<dbReference type="GO" id="GO:0005732">
    <property type="term" value="C:sno(s)RNA-containing ribonucleoprotein complex"/>
    <property type="evidence" value="ECO:0000250"/>
    <property type="project" value="dictyBase"/>
</dbReference>
<dbReference type="GO" id="GO:0030515">
    <property type="term" value="F:snoRNA binding"/>
    <property type="evidence" value="ECO:0000318"/>
    <property type="project" value="GO_Central"/>
</dbReference>
<dbReference type="GO" id="GO:0042274">
    <property type="term" value="P:ribosomal small subunit biogenesis"/>
    <property type="evidence" value="ECO:0000250"/>
    <property type="project" value="UniProtKB"/>
</dbReference>
<dbReference type="GO" id="GO:0006364">
    <property type="term" value="P:rRNA processing"/>
    <property type="evidence" value="ECO:0000250"/>
    <property type="project" value="dictyBase"/>
</dbReference>
<dbReference type="FunFam" id="1.10.246.90:FF:000005">
    <property type="entry name" value="Nucleolar protein 5, putative"/>
    <property type="match status" value="1"/>
</dbReference>
<dbReference type="FunFam" id="1.10.287.4070:FF:000002">
    <property type="entry name" value="Nucleolar protein 56"/>
    <property type="match status" value="1"/>
</dbReference>
<dbReference type="Gene3D" id="1.10.287.4070">
    <property type="match status" value="1"/>
</dbReference>
<dbReference type="Gene3D" id="1.10.246.90">
    <property type="entry name" value="Nop domain"/>
    <property type="match status" value="1"/>
</dbReference>
<dbReference type="InterPro" id="IPR045056">
    <property type="entry name" value="Nop56/Nop58"/>
</dbReference>
<dbReference type="InterPro" id="IPR012974">
    <property type="entry name" value="NOP58/56_N"/>
</dbReference>
<dbReference type="InterPro" id="IPR042239">
    <property type="entry name" value="Nop_C"/>
</dbReference>
<dbReference type="InterPro" id="IPR002687">
    <property type="entry name" value="Nop_dom"/>
</dbReference>
<dbReference type="InterPro" id="IPR036070">
    <property type="entry name" value="Nop_dom_sf"/>
</dbReference>
<dbReference type="InterPro" id="IPR012976">
    <property type="entry name" value="NOSIC"/>
</dbReference>
<dbReference type="PANTHER" id="PTHR10894">
    <property type="entry name" value="NUCLEOLAR PROTEIN 5 NUCLEOLAR PROTEIN NOP5 NOP58"/>
    <property type="match status" value="1"/>
</dbReference>
<dbReference type="PANTHER" id="PTHR10894:SF0">
    <property type="entry name" value="NUCLEOLAR PROTEIN 56"/>
    <property type="match status" value="1"/>
</dbReference>
<dbReference type="Pfam" id="PF01798">
    <property type="entry name" value="Nop"/>
    <property type="match status" value="1"/>
</dbReference>
<dbReference type="Pfam" id="PF08156">
    <property type="entry name" value="NOP5NT"/>
    <property type="match status" value="1"/>
</dbReference>
<dbReference type="SMART" id="SM00931">
    <property type="entry name" value="NOSIC"/>
    <property type="match status" value="1"/>
</dbReference>
<dbReference type="SUPFAM" id="SSF89124">
    <property type="entry name" value="Nop domain"/>
    <property type="match status" value="1"/>
</dbReference>
<dbReference type="PROSITE" id="PS51358">
    <property type="entry name" value="NOP"/>
    <property type="match status" value="1"/>
</dbReference>
<comment type="function">
    <text evidence="1">Probably involved in the early to middle stages of 60S ribosomal subunit biogenesis. As a component of box C/D small nucleolar ribonucleoprotein (snoRNP) complexes could function in methylation of ribosomal RNAs (rRNAs).</text>
</comment>
<comment type="subcellular location">
    <subcellularLocation>
        <location evidence="1">Nucleus</location>
        <location evidence="1">Nucleolus</location>
    </subcellularLocation>
</comment>
<comment type="similarity">
    <text evidence="4">Belongs to the NOP5/NOP56 family.</text>
</comment>
<keyword id="KW-0539">Nucleus</keyword>
<keyword id="KW-1185">Reference proteome</keyword>
<keyword id="KW-0690">Ribosome biogenesis</keyword>